<keyword id="KW-0963">Cytoplasm</keyword>
<keyword id="KW-0413">Isomerase</keyword>
<keyword id="KW-0414">Isoprene biosynthesis</keyword>
<keyword id="KW-0460">Magnesium</keyword>
<keyword id="KW-0464">Manganese</keyword>
<keyword id="KW-0479">Metal-binding</keyword>
<evidence type="ECO:0000255" key="1">
    <source>
        <dbReference type="HAMAP-Rule" id="MF_00202"/>
    </source>
</evidence>
<sequence>MQTEHVILLNAQGVPTGTLEKYAAHTADTLLHLAFSSWLFNAKGQLLVTRRALSKKAWPGVWTNSVCGHPQLGESNEDAVIRRCRYELGVEITPPESIYPDFRYRATDPSGIVENEVCPVFAARTTSALQINDDEVMDYQWCDLADVLHGIDATPWAFSPWMVMQAANSEARKLLSAFAQHN</sequence>
<reference key="1">
    <citation type="submission" date="2008-02" db="EMBL/GenBank/DDBJ databases">
        <title>Complete sequence of Escherichia coli C str. ATCC 8739.</title>
        <authorList>
            <person name="Copeland A."/>
            <person name="Lucas S."/>
            <person name="Lapidus A."/>
            <person name="Glavina del Rio T."/>
            <person name="Dalin E."/>
            <person name="Tice H."/>
            <person name="Bruce D."/>
            <person name="Goodwin L."/>
            <person name="Pitluck S."/>
            <person name="Kiss H."/>
            <person name="Brettin T."/>
            <person name="Detter J.C."/>
            <person name="Han C."/>
            <person name="Kuske C.R."/>
            <person name="Schmutz J."/>
            <person name="Larimer F."/>
            <person name="Land M."/>
            <person name="Hauser L."/>
            <person name="Kyrpides N."/>
            <person name="Mikhailova N."/>
            <person name="Ingram L."/>
            <person name="Richardson P."/>
        </authorList>
    </citation>
    <scope>NUCLEOTIDE SEQUENCE [LARGE SCALE GENOMIC DNA]</scope>
    <source>
        <strain>ATCC 8739 / DSM 1576 / NBRC 3972 / NCIMB 8545 / WDCM 00012 / Crooks</strain>
    </source>
</reference>
<gene>
    <name evidence="1" type="primary">idi</name>
    <name type="ordered locus">EcolC_0820</name>
</gene>
<name>IDI_ECOLC</name>
<organism>
    <name type="scientific">Escherichia coli (strain ATCC 8739 / DSM 1576 / NBRC 3972 / NCIMB 8545 / WDCM 00012 / Crooks)</name>
    <dbReference type="NCBI Taxonomy" id="481805"/>
    <lineage>
        <taxon>Bacteria</taxon>
        <taxon>Pseudomonadati</taxon>
        <taxon>Pseudomonadota</taxon>
        <taxon>Gammaproteobacteria</taxon>
        <taxon>Enterobacterales</taxon>
        <taxon>Enterobacteriaceae</taxon>
        <taxon>Escherichia</taxon>
    </lineage>
</organism>
<comment type="function">
    <text evidence="1">Catalyzes the 1,3-allylic rearrangement of the homoallylic substrate isopentenyl (IPP) to its highly electrophilic allylic isomer, dimethylallyl diphosphate (DMAPP).</text>
</comment>
<comment type="catalytic activity">
    <reaction evidence="1">
        <text>isopentenyl diphosphate = dimethylallyl diphosphate</text>
        <dbReference type="Rhea" id="RHEA:23284"/>
        <dbReference type="ChEBI" id="CHEBI:57623"/>
        <dbReference type="ChEBI" id="CHEBI:128769"/>
        <dbReference type="EC" id="5.3.3.2"/>
    </reaction>
</comment>
<comment type="cofactor">
    <cofactor evidence="1">
        <name>Mg(2+)</name>
        <dbReference type="ChEBI" id="CHEBI:18420"/>
    </cofactor>
    <text evidence="1">Binds 1 Mg(2+) ion per subunit. The magnesium ion binds only when substrate is bound.</text>
</comment>
<comment type="cofactor">
    <cofactor evidence="1">
        <name>Mn(2+)</name>
        <dbReference type="ChEBI" id="CHEBI:29035"/>
    </cofactor>
    <text evidence="1">Binds 1 Mn(2+) ion per subunit.</text>
</comment>
<comment type="pathway">
    <text evidence="1">Isoprenoid biosynthesis; dimethylallyl diphosphate biosynthesis; dimethylallyl diphosphate from isopentenyl diphosphate: step 1/1.</text>
</comment>
<comment type="subunit">
    <text evidence="1">Homodimer.</text>
</comment>
<comment type="subcellular location">
    <subcellularLocation>
        <location evidence="1">Cytoplasm</location>
    </subcellularLocation>
</comment>
<comment type="similarity">
    <text evidence="1">Belongs to the IPP isomerase type 1 family.</text>
</comment>
<proteinExistence type="inferred from homology"/>
<protein>
    <recommendedName>
        <fullName evidence="1">Isopentenyl-diphosphate Delta-isomerase</fullName>
        <shortName evidence="1">IPP isomerase</shortName>
        <ecNumber evidence="1">5.3.3.2</ecNumber>
    </recommendedName>
    <alternativeName>
        <fullName evidence="1">IPP:DMAPP isomerase</fullName>
    </alternativeName>
    <alternativeName>
        <fullName evidence="1">Isopentenyl pyrophosphate isomerase</fullName>
    </alternativeName>
</protein>
<dbReference type="EC" id="5.3.3.2" evidence="1"/>
<dbReference type="EMBL" id="CP000946">
    <property type="protein sequence ID" value="ACA76492.1"/>
    <property type="molecule type" value="Genomic_DNA"/>
</dbReference>
<dbReference type="RefSeq" id="WP_001192794.1">
    <property type="nucleotide sequence ID" value="NZ_MTFT01000004.1"/>
</dbReference>
<dbReference type="SMR" id="B1ITB3"/>
<dbReference type="KEGG" id="ecl:EcolC_0820"/>
<dbReference type="HOGENOM" id="CLU_060552_2_0_6"/>
<dbReference type="UniPathway" id="UPA00059">
    <property type="reaction ID" value="UER00104"/>
</dbReference>
<dbReference type="GO" id="GO:0005737">
    <property type="term" value="C:cytoplasm"/>
    <property type="evidence" value="ECO:0007669"/>
    <property type="project" value="UniProtKB-SubCell"/>
</dbReference>
<dbReference type="GO" id="GO:0004452">
    <property type="term" value="F:isopentenyl-diphosphate delta-isomerase activity"/>
    <property type="evidence" value="ECO:0007669"/>
    <property type="project" value="UniProtKB-UniRule"/>
</dbReference>
<dbReference type="GO" id="GO:0046872">
    <property type="term" value="F:metal ion binding"/>
    <property type="evidence" value="ECO:0007669"/>
    <property type="project" value="UniProtKB-KW"/>
</dbReference>
<dbReference type="GO" id="GO:0050992">
    <property type="term" value="P:dimethylallyl diphosphate biosynthetic process"/>
    <property type="evidence" value="ECO:0007669"/>
    <property type="project" value="UniProtKB-UniRule"/>
</dbReference>
<dbReference type="GO" id="GO:0008299">
    <property type="term" value="P:isoprenoid biosynthetic process"/>
    <property type="evidence" value="ECO:0007669"/>
    <property type="project" value="UniProtKB-KW"/>
</dbReference>
<dbReference type="CDD" id="cd02885">
    <property type="entry name" value="NUDIX_IPP_Isomerase"/>
    <property type="match status" value="1"/>
</dbReference>
<dbReference type="FunFam" id="3.90.79.10:FF:000009">
    <property type="entry name" value="Isopentenyl-diphosphate Delta-isomerase"/>
    <property type="match status" value="1"/>
</dbReference>
<dbReference type="Gene3D" id="3.90.79.10">
    <property type="entry name" value="Nucleoside Triphosphate Pyrophosphohydrolase"/>
    <property type="match status" value="1"/>
</dbReference>
<dbReference type="HAMAP" id="MF_00202">
    <property type="entry name" value="Idi"/>
    <property type="match status" value="1"/>
</dbReference>
<dbReference type="InterPro" id="IPR056375">
    <property type="entry name" value="Idi_bact"/>
</dbReference>
<dbReference type="InterPro" id="IPR011876">
    <property type="entry name" value="IsopentenylPP_isomerase_typ1"/>
</dbReference>
<dbReference type="InterPro" id="IPR015797">
    <property type="entry name" value="NUDIX_hydrolase-like_dom_sf"/>
</dbReference>
<dbReference type="InterPro" id="IPR000086">
    <property type="entry name" value="NUDIX_hydrolase_dom"/>
</dbReference>
<dbReference type="NCBIfam" id="TIGR02150">
    <property type="entry name" value="IPP_isom_1"/>
    <property type="match status" value="1"/>
</dbReference>
<dbReference type="NCBIfam" id="NF002995">
    <property type="entry name" value="PRK03759.1"/>
    <property type="match status" value="1"/>
</dbReference>
<dbReference type="PANTHER" id="PTHR10885">
    <property type="entry name" value="ISOPENTENYL-DIPHOSPHATE DELTA-ISOMERASE"/>
    <property type="match status" value="1"/>
</dbReference>
<dbReference type="PANTHER" id="PTHR10885:SF0">
    <property type="entry name" value="ISOPENTENYL-DIPHOSPHATE DELTA-ISOMERASE"/>
    <property type="match status" value="1"/>
</dbReference>
<dbReference type="Pfam" id="PF00293">
    <property type="entry name" value="NUDIX"/>
    <property type="match status" value="1"/>
</dbReference>
<dbReference type="PIRSF" id="PIRSF018427">
    <property type="entry name" value="Isopntndiph_ism"/>
    <property type="match status" value="1"/>
</dbReference>
<dbReference type="SUPFAM" id="SSF55811">
    <property type="entry name" value="Nudix"/>
    <property type="match status" value="1"/>
</dbReference>
<dbReference type="PROSITE" id="PS51462">
    <property type="entry name" value="NUDIX"/>
    <property type="match status" value="1"/>
</dbReference>
<feature type="chain" id="PRO_1000077742" description="Isopentenyl-diphosphate Delta-isomerase">
    <location>
        <begin position="1"/>
        <end position="182"/>
    </location>
</feature>
<feature type="domain" description="Nudix hydrolase">
    <location>
        <begin position="30"/>
        <end position="164"/>
    </location>
</feature>
<feature type="active site" evidence="1">
    <location>
        <position position="67"/>
    </location>
</feature>
<feature type="active site" evidence="1">
    <location>
        <position position="116"/>
    </location>
</feature>
<feature type="binding site" evidence="1">
    <location>
        <position position="25"/>
    </location>
    <ligand>
        <name>Mn(2+)</name>
        <dbReference type="ChEBI" id="CHEBI:29035"/>
    </ligand>
</feature>
<feature type="binding site" evidence="1">
    <location>
        <position position="32"/>
    </location>
    <ligand>
        <name>Mn(2+)</name>
        <dbReference type="ChEBI" id="CHEBI:29035"/>
    </ligand>
</feature>
<feature type="binding site" evidence="1">
    <location>
        <position position="69"/>
    </location>
    <ligand>
        <name>Mn(2+)</name>
        <dbReference type="ChEBI" id="CHEBI:29035"/>
    </ligand>
</feature>
<feature type="binding site" evidence="1">
    <location>
        <position position="87"/>
    </location>
    <ligand>
        <name>Mg(2+)</name>
        <dbReference type="ChEBI" id="CHEBI:18420"/>
    </ligand>
</feature>
<feature type="binding site" evidence="1">
    <location>
        <position position="114"/>
    </location>
    <ligand>
        <name>Mn(2+)</name>
        <dbReference type="ChEBI" id="CHEBI:29035"/>
    </ligand>
</feature>
<feature type="binding site" evidence="1">
    <location>
        <position position="116"/>
    </location>
    <ligand>
        <name>Mn(2+)</name>
        <dbReference type="ChEBI" id="CHEBI:29035"/>
    </ligand>
</feature>
<accession>B1ITB3</accession>